<comment type="function">
    <text evidence="1">Together with the chaperonin GroEL, plays an essential role in assisting protein folding. The GroEL-GroES system forms a nano-cage that allows encapsulation of the non-native substrate proteins and provides a physical environment optimized to promote and accelerate protein folding. GroES binds to the apical surface of the GroEL ring, thereby capping the opening of the GroEL channel.</text>
</comment>
<comment type="subunit">
    <text evidence="1">Heptamer of 7 subunits arranged in a ring. Interacts with the chaperonin GroEL.</text>
</comment>
<comment type="subcellular location">
    <subcellularLocation>
        <location evidence="1">Cytoplasm</location>
    </subcellularLocation>
</comment>
<comment type="similarity">
    <text evidence="1">Belongs to the GroES chaperonin family.</text>
</comment>
<reference key="1">
    <citation type="submission" date="2006-12" db="EMBL/GenBank/DDBJ databases">
        <authorList>
            <person name="Hendrix L."/>
            <person name="Mohamoud Y."/>
            <person name="Radune D."/>
            <person name="Shvartsbeyn A."/>
            <person name="Daugherty S."/>
            <person name="Dodson R."/>
            <person name="Durkin A.S."/>
            <person name="Harkins D."/>
            <person name="Huot H."/>
            <person name="Kothari S.P."/>
            <person name="Madupu R."/>
            <person name="Li J."/>
            <person name="Nelson W.C."/>
            <person name="Shrivastava S."/>
            <person name="Giglio M.G."/>
            <person name="Haft D."/>
            <person name="Selengut J."/>
            <person name="Fraser-Ligget C."/>
            <person name="Seshadri R."/>
        </authorList>
    </citation>
    <scope>NUCLEOTIDE SEQUENCE [LARGE SCALE GENOMIC DNA]</scope>
    <source>
        <strain>ATCC 35685 / KC583 / Herrer 020/F12,63</strain>
    </source>
</reference>
<evidence type="ECO:0000255" key="1">
    <source>
        <dbReference type="HAMAP-Rule" id="MF_00580"/>
    </source>
</evidence>
<name>CH10_BARBK</name>
<organism>
    <name type="scientific">Bartonella bacilliformis (strain ATCC 35685 / KC583 / Herrer 020/F12,63)</name>
    <dbReference type="NCBI Taxonomy" id="360095"/>
    <lineage>
        <taxon>Bacteria</taxon>
        <taxon>Pseudomonadati</taxon>
        <taxon>Pseudomonadota</taxon>
        <taxon>Alphaproteobacteria</taxon>
        <taxon>Hyphomicrobiales</taxon>
        <taxon>Bartonellaceae</taxon>
        <taxon>Bartonella</taxon>
    </lineage>
</organism>
<gene>
    <name evidence="1" type="primary">groES</name>
    <name evidence="1" type="synonym">groS</name>
    <name type="ordered locus">BARBAKC583_1173</name>
</gene>
<keyword id="KW-0143">Chaperone</keyword>
<keyword id="KW-0963">Cytoplasm</keyword>
<dbReference type="EMBL" id="CP000524">
    <property type="protein sequence ID" value="ABM44686.1"/>
    <property type="molecule type" value="Genomic_DNA"/>
</dbReference>
<dbReference type="RefSeq" id="WP_005767842.1">
    <property type="nucleotide sequence ID" value="NC_008783.1"/>
</dbReference>
<dbReference type="SMR" id="A1UTX8"/>
<dbReference type="STRING" id="360095.BARBAKC583_1173"/>
<dbReference type="GeneID" id="4684737"/>
<dbReference type="KEGG" id="bbk:BARBAKC583_1173"/>
<dbReference type="eggNOG" id="COG0234">
    <property type="taxonomic scope" value="Bacteria"/>
</dbReference>
<dbReference type="HOGENOM" id="CLU_132825_1_0_5"/>
<dbReference type="OrthoDB" id="9806791at2"/>
<dbReference type="Proteomes" id="UP000000643">
    <property type="component" value="Chromosome"/>
</dbReference>
<dbReference type="GO" id="GO:0005737">
    <property type="term" value="C:cytoplasm"/>
    <property type="evidence" value="ECO:0007669"/>
    <property type="project" value="UniProtKB-SubCell"/>
</dbReference>
<dbReference type="GO" id="GO:0005524">
    <property type="term" value="F:ATP binding"/>
    <property type="evidence" value="ECO:0007669"/>
    <property type="project" value="InterPro"/>
</dbReference>
<dbReference type="GO" id="GO:0046872">
    <property type="term" value="F:metal ion binding"/>
    <property type="evidence" value="ECO:0007669"/>
    <property type="project" value="TreeGrafter"/>
</dbReference>
<dbReference type="GO" id="GO:0044183">
    <property type="term" value="F:protein folding chaperone"/>
    <property type="evidence" value="ECO:0007669"/>
    <property type="project" value="InterPro"/>
</dbReference>
<dbReference type="GO" id="GO:0051087">
    <property type="term" value="F:protein-folding chaperone binding"/>
    <property type="evidence" value="ECO:0007669"/>
    <property type="project" value="TreeGrafter"/>
</dbReference>
<dbReference type="GO" id="GO:0051082">
    <property type="term" value="F:unfolded protein binding"/>
    <property type="evidence" value="ECO:0007669"/>
    <property type="project" value="TreeGrafter"/>
</dbReference>
<dbReference type="GO" id="GO:0051085">
    <property type="term" value="P:chaperone cofactor-dependent protein refolding"/>
    <property type="evidence" value="ECO:0007669"/>
    <property type="project" value="TreeGrafter"/>
</dbReference>
<dbReference type="CDD" id="cd00320">
    <property type="entry name" value="cpn10"/>
    <property type="match status" value="1"/>
</dbReference>
<dbReference type="FunFam" id="2.30.33.40:FF:000001">
    <property type="entry name" value="10 kDa chaperonin"/>
    <property type="match status" value="1"/>
</dbReference>
<dbReference type="Gene3D" id="2.30.33.40">
    <property type="entry name" value="GroES chaperonin"/>
    <property type="match status" value="1"/>
</dbReference>
<dbReference type="HAMAP" id="MF_00580">
    <property type="entry name" value="CH10"/>
    <property type="match status" value="1"/>
</dbReference>
<dbReference type="InterPro" id="IPR020818">
    <property type="entry name" value="Chaperonin_GroES"/>
</dbReference>
<dbReference type="InterPro" id="IPR037124">
    <property type="entry name" value="Chaperonin_GroES_sf"/>
</dbReference>
<dbReference type="InterPro" id="IPR018369">
    <property type="entry name" value="Chaprnonin_Cpn10_CS"/>
</dbReference>
<dbReference type="InterPro" id="IPR011032">
    <property type="entry name" value="GroES-like_sf"/>
</dbReference>
<dbReference type="NCBIfam" id="NF001527">
    <property type="entry name" value="PRK00364.1-2"/>
    <property type="match status" value="1"/>
</dbReference>
<dbReference type="NCBIfam" id="NF001529">
    <property type="entry name" value="PRK00364.1-5"/>
    <property type="match status" value="1"/>
</dbReference>
<dbReference type="NCBIfam" id="NF001531">
    <property type="entry name" value="PRK00364.2-2"/>
    <property type="match status" value="1"/>
</dbReference>
<dbReference type="NCBIfam" id="NF001533">
    <property type="entry name" value="PRK00364.2-4"/>
    <property type="match status" value="1"/>
</dbReference>
<dbReference type="NCBIfam" id="NF001534">
    <property type="entry name" value="PRK00364.2-5"/>
    <property type="match status" value="1"/>
</dbReference>
<dbReference type="PANTHER" id="PTHR10772">
    <property type="entry name" value="10 KDA HEAT SHOCK PROTEIN"/>
    <property type="match status" value="1"/>
</dbReference>
<dbReference type="PANTHER" id="PTHR10772:SF58">
    <property type="entry name" value="CO-CHAPERONIN GROES"/>
    <property type="match status" value="1"/>
</dbReference>
<dbReference type="Pfam" id="PF00166">
    <property type="entry name" value="Cpn10"/>
    <property type="match status" value="1"/>
</dbReference>
<dbReference type="PRINTS" id="PR00297">
    <property type="entry name" value="CHAPERONIN10"/>
</dbReference>
<dbReference type="SMART" id="SM00883">
    <property type="entry name" value="Cpn10"/>
    <property type="match status" value="1"/>
</dbReference>
<dbReference type="SUPFAM" id="SSF50129">
    <property type="entry name" value="GroES-like"/>
    <property type="match status" value="1"/>
</dbReference>
<dbReference type="PROSITE" id="PS00681">
    <property type="entry name" value="CHAPERONINS_CPN10"/>
    <property type="match status" value="1"/>
</dbReference>
<sequence>MANTKFRPLHDRVVVRRVESENKTAGGIIIPDTAQEKPQEGEVIAVGNGVLNDNGQRVSLEVKEGDRILFGKWSGTEVKINGEELLIMKESDIMGILA</sequence>
<proteinExistence type="inferred from homology"/>
<feature type="chain" id="PRO_1000025213" description="Co-chaperonin GroES">
    <location>
        <begin position="1"/>
        <end position="98"/>
    </location>
</feature>
<protein>
    <recommendedName>
        <fullName evidence="1">Co-chaperonin GroES</fullName>
    </recommendedName>
    <alternativeName>
        <fullName evidence="1">10 kDa chaperonin</fullName>
    </alternativeName>
    <alternativeName>
        <fullName evidence="1">Chaperonin-10</fullName>
        <shortName evidence="1">Cpn10</shortName>
    </alternativeName>
</protein>
<accession>A1UTX8</accession>